<organism>
    <name type="scientific">Bacillus anthracis</name>
    <dbReference type="NCBI Taxonomy" id="1392"/>
    <lineage>
        <taxon>Bacteria</taxon>
        <taxon>Bacillati</taxon>
        <taxon>Bacillota</taxon>
        <taxon>Bacilli</taxon>
        <taxon>Bacillales</taxon>
        <taxon>Bacillaceae</taxon>
        <taxon>Bacillus</taxon>
        <taxon>Bacillus cereus group</taxon>
    </lineage>
</organism>
<evidence type="ECO:0000255" key="1">
    <source>
        <dbReference type="HAMAP-Rule" id="MF_01132"/>
    </source>
</evidence>
<accession>Q81TR6</accession>
<accession>Q6I1Z9</accession>
<accession>Q6KVT8</accession>
<comment type="function">
    <text evidence="1">Global transcriptional regulator that plays a key role in stress response and exerts either positive or negative regulation of genes. Acts by interacting with the C-terminal domain of the alpha subunit of the RNA polymerase (RNAP). This interaction can enhance binding of RNAP to the promoter region of target genes and stimulate their transcription, or block interaction of RNAP with activator.</text>
</comment>
<comment type="subunit">
    <text evidence="1">Interacts with the C-terminal domain of the alpha subunit of the RNAP.</text>
</comment>
<comment type="subcellular location">
    <subcellularLocation>
        <location evidence="1">Cytoplasm</location>
    </subcellularLocation>
</comment>
<comment type="similarity">
    <text evidence="1">Belongs to the ArsC family. Spx subfamily.</text>
</comment>
<proteinExistence type="inferred from homology"/>
<feature type="chain" id="PRO_0000162545" description="Global transcriptional regulator Spx 1">
    <location>
        <begin position="1"/>
        <end position="131"/>
    </location>
</feature>
<feature type="disulfide bond" description="Redox-active" evidence="1">
    <location>
        <begin position="10"/>
        <end position="13"/>
    </location>
</feature>
<reference key="1">
    <citation type="journal article" date="2003" name="Nature">
        <title>The genome sequence of Bacillus anthracis Ames and comparison to closely related bacteria.</title>
        <authorList>
            <person name="Read T.D."/>
            <person name="Peterson S.N."/>
            <person name="Tourasse N.J."/>
            <person name="Baillie L.W."/>
            <person name="Paulsen I.T."/>
            <person name="Nelson K.E."/>
            <person name="Tettelin H."/>
            <person name="Fouts D.E."/>
            <person name="Eisen J.A."/>
            <person name="Gill S.R."/>
            <person name="Holtzapple E.K."/>
            <person name="Okstad O.A."/>
            <person name="Helgason E."/>
            <person name="Rilstone J."/>
            <person name="Wu M."/>
            <person name="Kolonay J.F."/>
            <person name="Beanan M.J."/>
            <person name="Dodson R.J."/>
            <person name="Brinkac L.M."/>
            <person name="Gwinn M.L."/>
            <person name="DeBoy R.T."/>
            <person name="Madpu R."/>
            <person name="Daugherty S.C."/>
            <person name="Durkin A.S."/>
            <person name="Haft D.H."/>
            <person name="Nelson W.C."/>
            <person name="Peterson J.D."/>
            <person name="Pop M."/>
            <person name="Khouri H.M."/>
            <person name="Radune D."/>
            <person name="Benton J.L."/>
            <person name="Mahamoud Y."/>
            <person name="Jiang L."/>
            <person name="Hance I.R."/>
            <person name="Weidman J.F."/>
            <person name="Berry K.J."/>
            <person name="Plaut R.D."/>
            <person name="Wolf A.M."/>
            <person name="Watkins K.L."/>
            <person name="Nierman W.C."/>
            <person name="Hazen A."/>
            <person name="Cline R.T."/>
            <person name="Redmond C."/>
            <person name="Thwaite J.E."/>
            <person name="White O."/>
            <person name="Salzberg S.L."/>
            <person name="Thomason B."/>
            <person name="Friedlander A.M."/>
            <person name="Koehler T.M."/>
            <person name="Hanna P.C."/>
            <person name="Kolstoe A.-B."/>
            <person name="Fraser C.M."/>
        </authorList>
    </citation>
    <scope>NUCLEOTIDE SEQUENCE [LARGE SCALE GENOMIC DNA]</scope>
    <source>
        <strain>Ames / isolate Porton</strain>
    </source>
</reference>
<reference key="2">
    <citation type="journal article" date="2009" name="J. Bacteriol.">
        <title>The complete genome sequence of Bacillus anthracis Ames 'Ancestor'.</title>
        <authorList>
            <person name="Ravel J."/>
            <person name="Jiang L."/>
            <person name="Stanley S.T."/>
            <person name="Wilson M.R."/>
            <person name="Decker R.S."/>
            <person name="Read T.D."/>
            <person name="Worsham P."/>
            <person name="Keim P.S."/>
            <person name="Salzberg S.L."/>
            <person name="Fraser-Liggett C.M."/>
            <person name="Rasko D.A."/>
        </authorList>
    </citation>
    <scope>NUCLEOTIDE SEQUENCE [LARGE SCALE GENOMIC DNA]</scope>
    <source>
        <strain>Ames ancestor</strain>
    </source>
</reference>
<reference key="3">
    <citation type="submission" date="2004-01" db="EMBL/GenBank/DDBJ databases">
        <title>Complete genome sequence of Bacillus anthracis Sterne.</title>
        <authorList>
            <person name="Brettin T.S."/>
            <person name="Bruce D."/>
            <person name="Challacombe J.F."/>
            <person name="Gilna P."/>
            <person name="Han C."/>
            <person name="Hill K."/>
            <person name="Hitchcock P."/>
            <person name="Jackson P."/>
            <person name="Keim P."/>
            <person name="Longmire J."/>
            <person name="Lucas S."/>
            <person name="Okinaka R."/>
            <person name="Richardson P."/>
            <person name="Rubin E."/>
            <person name="Tice H."/>
        </authorList>
    </citation>
    <scope>NUCLEOTIDE SEQUENCE [LARGE SCALE GENOMIC DNA]</scope>
    <source>
        <strain>Sterne</strain>
    </source>
</reference>
<name>SPX1_BACAN</name>
<keyword id="KW-0963">Cytoplasm</keyword>
<keyword id="KW-1015">Disulfide bond</keyword>
<keyword id="KW-0676">Redox-active center</keyword>
<keyword id="KW-1185">Reference proteome</keyword>
<keyword id="KW-0804">Transcription</keyword>
<keyword id="KW-0805">Transcription regulation</keyword>
<dbReference type="EMBL" id="AE016879">
    <property type="protein sequence ID" value="AAP25161.1"/>
    <property type="molecule type" value="Genomic_DNA"/>
</dbReference>
<dbReference type="EMBL" id="AE017334">
    <property type="protein sequence ID" value="AAT30288.1"/>
    <property type="molecule type" value="Genomic_DNA"/>
</dbReference>
<dbReference type="EMBL" id="AE017225">
    <property type="protein sequence ID" value="AAT53432.1"/>
    <property type="molecule type" value="Genomic_DNA"/>
</dbReference>
<dbReference type="RefSeq" id="NP_843675.1">
    <property type="nucleotide sequence ID" value="NC_003997.3"/>
</dbReference>
<dbReference type="RefSeq" id="YP_027381.1">
    <property type="nucleotide sequence ID" value="NC_005945.1"/>
</dbReference>
<dbReference type="SMR" id="Q81TR6"/>
<dbReference type="STRING" id="261594.GBAA_1200"/>
<dbReference type="DNASU" id="1089241"/>
<dbReference type="KEGG" id="ban:BA_1200"/>
<dbReference type="KEGG" id="bar:GBAA_1200"/>
<dbReference type="KEGG" id="bat:BAS1109"/>
<dbReference type="PATRIC" id="fig|198094.11.peg.1178"/>
<dbReference type="eggNOG" id="COG1393">
    <property type="taxonomic scope" value="Bacteria"/>
</dbReference>
<dbReference type="HOGENOM" id="CLU_116644_1_1_9"/>
<dbReference type="OMA" id="RPIIMDD"/>
<dbReference type="OrthoDB" id="9794155at2"/>
<dbReference type="Proteomes" id="UP000000427">
    <property type="component" value="Chromosome"/>
</dbReference>
<dbReference type="Proteomes" id="UP000000594">
    <property type="component" value="Chromosome"/>
</dbReference>
<dbReference type="GO" id="GO:0005737">
    <property type="term" value="C:cytoplasm"/>
    <property type="evidence" value="ECO:0007669"/>
    <property type="project" value="UniProtKB-SubCell"/>
</dbReference>
<dbReference type="GO" id="GO:0045892">
    <property type="term" value="P:negative regulation of DNA-templated transcription"/>
    <property type="evidence" value="ECO:0007669"/>
    <property type="project" value="InterPro"/>
</dbReference>
<dbReference type="CDD" id="cd03032">
    <property type="entry name" value="ArsC_Spx"/>
    <property type="match status" value="1"/>
</dbReference>
<dbReference type="Gene3D" id="3.40.30.10">
    <property type="entry name" value="Glutaredoxin"/>
    <property type="match status" value="1"/>
</dbReference>
<dbReference type="HAMAP" id="MF_01132">
    <property type="entry name" value="Spx"/>
    <property type="match status" value="1"/>
</dbReference>
<dbReference type="InterPro" id="IPR006660">
    <property type="entry name" value="Arsenate_reductase-like"/>
</dbReference>
<dbReference type="InterPro" id="IPR023731">
    <property type="entry name" value="Spx"/>
</dbReference>
<dbReference type="InterPro" id="IPR036249">
    <property type="entry name" value="Thioredoxin-like_sf"/>
</dbReference>
<dbReference type="InterPro" id="IPR006504">
    <property type="entry name" value="Tscrpt_reg_Spx/MgsR"/>
</dbReference>
<dbReference type="NCBIfam" id="TIGR01617">
    <property type="entry name" value="arsC_related"/>
    <property type="match status" value="1"/>
</dbReference>
<dbReference type="NCBIfam" id="NF002459">
    <property type="entry name" value="PRK01655.1"/>
    <property type="match status" value="1"/>
</dbReference>
<dbReference type="NCBIfam" id="NF009210">
    <property type="entry name" value="PRK12559.1"/>
    <property type="match status" value="1"/>
</dbReference>
<dbReference type="PANTHER" id="PTHR30041">
    <property type="entry name" value="ARSENATE REDUCTASE"/>
    <property type="match status" value="1"/>
</dbReference>
<dbReference type="PANTHER" id="PTHR30041:SF7">
    <property type="entry name" value="GLOBAL TRANSCRIPTIONAL REGULATOR SPX"/>
    <property type="match status" value="1"/>
</dbReference>
<dbReference type="Pfam" id="PF03960">
    <property type="entry name" value="ArsC"/>
    <property type="match status" value="1"/>
</dbReference>
<dbReference type="SUPFAM" id="SSF52833">
    <property type="entry name" value="Thioredoxin-like"/>
    <property type="match status" value="1"/>
</dbReference>
<dbReference type="PROSITE" id="PS51353">
    <property type="entry name" value="ARSC"/>
    <property type="match status" value="1"/>
</dbReference>
<protein>
    <recommendedName>
        <fullName evidence="1">Global transcriptional regulator Spx 1</fullName>
    </recommendedName>
</protein>
<sequence>MVTLYSSPSCTSCRKAKLWLEENHIPYTERNIFSDPLTIEEIKEILRMTESGTDEIISTRSKVFQELNVNLESLPLQDLYKMIRDYPGILRRPIMIDEKRLQVGYNEDEIRRFLPRTVRTFQLREAQRLVN</sequence>
<gene>
    <name evidence="1" type="primary">spx1</name>
    <name type="ordered locus">BA_1200</name>
    <name type="ordered locus">GBAA_1200</name>
    <name type="ordered locus">BAS1109</name>
</gene>